<organism>
    <name type="scientific">Phaeosphaeria nodorum (strain SN15 / ATCC MYA-4574 / FGSC 10173)</name>
    <name type="common">Glume blotch fungus</name>
    <name type="synonym">Parastagonospora nodorum</name>
    <dbReference type="NCBI Taxonomy" id="321614"/>
    <lineage>
        <taxon>Eukaryota</taxon>
        <taxon>Fungi</taxon>
        <taxon>Dikarya</taxon>
        <taxon>Ascomycota</taxon>
        <taxon>Pezizomycotina</taxon>
        <taxon>Dothideomycetes</taxon>
        <taxon>Pleosporomycetidae</taxon>
        <taxon>Pleosporales</taxon>
        <taxon>Pleosporineae</taxon>
        <taxon>Phaeosphaeriaceae</taxon>
        <taxon>Parastagonospora</taxon>
    </lineage>
</organism>
<keyword id="KW-0456">Lyase</keyword>
<keyword id="KW-0479">Metal-binding</keyword>
<keyword id="KW-0862">Zinc</keyword>
<reference key="1">
    <citation type="journal article" date="2007" name="Plant Cell">
        <title>Dothideomycete-plant interactions illuminated by genome sequencing and EST analysis of the wheat pathogen Stagonospora nodorum.</title>
        <authorList>
            <person name="Hane J.K."/>
            <person name="Lowe R.G.T."/>
            <person name="Solomon P.S."/>
            <person name="Tan K.-C."/>
            <person name="Schoch C.L."/>
            <person name="Spatafora J.W."/>
            <person name="Crous P.W."/>
            <person name="Kodira C.D."/>
            <person name="Birren B.W."/>
            <person name="Galagan J.E."/>
            <person name="Torriani S.F.F."/>
            <person name="McDonald B.A."/>
            <person name="Oliver R.P."/>
        </authorList>
    </citation>
    <scope>NUCLEOTIDE SEQUENCE [LARGE SCALE GENOMIC DNA]</scope>
    <source>
        <strain>SN15 / ATCC MYA-4574 / FGSC 10173</strain>
    </source>
</reference>
<dbReference type="EC" id="4.4.1.22" evidence="1"/>
<dbReference type="EMBL" id="CH445326">
    <property type="protein sequence ID" value="EAT91249.1"/>
    <property type="molecule type" value="Genomic_DNA"/>
</dbReference>
<dbReference type="RefSeq" id="XP_001792236.1">
    <property type="nucleotide sequence ID" value="XM_001792184.1"/>
</dbReference>
<dbReference type="SMR" id="Q0V314"/>
<dbReference type="STRING" id="321614.Q0V314"/>
<dbReference type="EnsemblFungi" id="SNOT_01600">
    <property type="protein sequence ID" value="SNOT_01600"/>
    <property type="gene ID" value="SNOG_01600"/>
</dbReference>
<dbReference type="GeneID" id="5969081"/>
<dbReference type="KEGG" id="pno:SNOG_01600"/>
<dbReference type="VEuPathDB" id="FungiDB:JI435_016000"/>
<dbReference type="eggNOG" id="ENOG502SKH9">
    <property type="taxonomic scope" value="Eukaryota"/>
</dbReference>
<dbReference type="HOGENOM" id="CLU_090716_0_0_1"/>
<dbReference type="InParanoid" id="Q0V314"/>
<dbReference type="OMA" id="ECGTHMY"/>
<dbReference type="OrthoDB" id="3446116at2759"/>
<dbReference type="UniPathway" id="UPA00562">
    <property type="reaction ID" value="UER00621"/>
</dbReference>
<dbReference type="Proteomes" id="UP000001055">
    <property type="component" value="Unassembled WGS sequence"/>
</dbReference>
<dbReference type="GO" id="GO:0051907">
    <property type="term" value="F:S-(hydroxymethyl)glutathione synthase activity"/>
    <property type="evidence" value="ECO:0007669"/>
    <property type="project" value="UniProtKB-UniRule"/>
</dbReference>
<dbReference type="GO" id="GO:0008270">
    <property type="term" value="F:zinc ion binding"/>
    <property type="evidence" value="ECO:0007669"/>
    <property type="project" value="UniProtKB-UniRule"/>
</dbReference>
<dbReference type="GO" id="GO:0046294">
    <property type="term" value="P:formaldehyde catabolic process"/>
    <property type="evidence" value="ECO:0007669"/>
    <property type="project" value="UniProtKB-UniRule"/>
</dbReference>
<dbReference type="Gene3D" id="3.90.1590.10">
    <property type="entry name" value="glutathione-dependent formaldehyde- activating enzyme (gfa)"/>
    <property type="match status" value="1"/>
</dbReference>
<dbReference type="HAMAP" id="MF_00723">
    <property type="entry name" value="Formald_GSH"/>
    <property type="match status" value="1"/>
</dbReference>
<dbReference type="InterPro" id="IPR006913">
    <property type="entry name" value="CENP-V/GFA"/>
</dbReference>
<dbReference type="InterPro" id="IPR014185">
    <property type="entry name" value="Formald_GSH"/>
</dbReference>
<dbReference type="InterPro" id="IPR011057">
    <property type="entry name" value="Mss4-like_sf"/>
</dbReference>
<dbReference type="NCBIfam" id="TIGR02820">
    <property type="entry name" value="formald_GSH"/>
    <property type="match status" value="1"/>
</dbReference>
<dbReference type="NCBIfam" id="NF003829">
    <property type="entry name" value="PRK05417.1"/>
    <property type="match status" value="1"/>
</dbReference>
<dbReference type="PANTHER" id="PTHR33337:SF40">
    <property type="entry name" value="CENP-V_GFA DOMAIN-CONTAINING PROTEIN-RELATED"/>
    <property type="match status" value="1"/>
</dbReference>
<dbReference type="PANTHER" id="PTHR33337">
    <property type="entry name" value="GFA DOMAIN-CONTAINING PROTEIN"/>
    <property type="match status" value="1"/>
</dbReference>
<dbReference type="Pfam" id="PF04828">
    <property type="entry name" value="GFA"/>
    <property type="match status" value="1"/>
</dbReference>
<dbReference type="PIRSF" id="PIRSF033318">
    <property type="entry name" value="Formald_GSH"/>
    <property type="match status" value="1"/>
</dbReference>
<dbReference type="SUPFAM" id="SSF51316">
    <property type="entry name" value="Mss4-like"/>
    <property type="match status" value="1"/>
</dbReference>
<dbReference type="PROSITE" id="PS51891">
    <property type="entry name" value="CENP_V_GFA"/>
    <property type="match status" value="1"/>
</dbReference>
<accession>Q0V314</accession>
<name>GFA_PHANO</name>
<feature type="chain" id="PRO_0000406162" description="Putative glutathione-dependent formaldehyde-activating enzyme">
    <location>
        <begin position="1"/>
        <end position="190"/>
    </location>
</feature>
<feature type="domain" description="CENP-V/GFA" evidence="2">
    <location>
        <begin position="19"/>
        <end position="165"/>
    </location>
</feature>
<feature type="binding site" evidence="1 2">
    <location>
        <position position="26"/>
    </location>
    <ligand>
        <name>Zn(2+)</name>
        <dbReference type="ChEBI" id="CHEBI:29105"/>
        <label>1</label>
        <note>structural</note>
    </ligand>
</feature>
<feature type="binding site" evidence="1 2">
    <location>
        <position position="28"/>
    </location>
    <ligand>
        <name>Zn(2+)</name>
        <dbReference type="ChEBI" id="CHEBI:29105"/>
        <label>1</label>
        <note>structural</note>
    </ligand>
</feature>
<feature type="binding site" evidence="1 2">
    <location>
        <position position="47"/>
    </location>
    <ligand>
        <name>Zn(2+)</name>
        <dbReference type="ChEBI" id="CHEBI:29105"/>
        <label>2</label>
        <note>catalytic</note>
    </ligand>
</feature>
<feature type="binding site" evidence="1 2">
    <location>
        <position position="49"/>
    </location>
    <ligand>
        <name>Zn(2+)</name>
        <dbReference type="ChEBI" id="CHEBI:29105"/>
        <label>2</label>
        <note>catalytic</note>
    </ligand>
</feature>
<feature type="binding site" evidence="1 2">
    <location>
        <position position="52"/>
    </location>
    <ligand>
        <name>Zn(2+)</name>
        <dbReference type="ChEBI" id="CHEBI:29105"/>
        <label>2</label>
        <note>catalytic</note>
    </ligand>
</feature>
<feature type="binding site" evidence="1 2">
    <location>
        <position position="94"/>
    </location>
    <ligand>
        <name>Zn(2+)</name>
        <dbReference type="ChEBI" id="CHEBI:29105"/>
        <label>1</label>
        <note>structural</note>
    </ligand>
</feature>
<feature type="binding site" evidence="1 2">
    <location>
        <position position="97"/>
    </location>
    <ligand>
        <name>Zn(2+)</name>
        <dbReference type="ChEBI" id="CHEBI:29105"/>
        <label>1</label>
        <note>structural</note>
    </ligand>
</feature>
<protein>
    <recommendedName>
        <fullName evidence="1">Putative glutathione-dependent formaldehyde-activating enzyme</fullName>
        <ecNumber evidence="1">4.4.1.22</ecNumber>
    </recommendedName>
    <alternativeName>
        <fullName evidence="1">S-(hydroxymethyl)glutathione synthase</fullName>
    </alternativeName>
</protein>
<comment type="function">
    <text evidence="1">Catalyzes the condensation of formaldehyde and glutathione to S-hydroxymethylglutathione.</text>
</comment>
<comment type="catalytic activity">
    <reaction evidence="1">
        <text>S-(hydroxymethyl)glutathione = glutathione + formaldehyde</text>
        <dbReference type="Rhea" id="RHEA:22488"/>
        <dbReference type="ChEBI" id="CHEBI:16842"/>
        <dbReference type="ChEBI" id="CHEBI:57925"/>
        <dbReference type="ChEBI" id="CHEBI:58758"/>
        <dbReference type="EC" id="4.4.1.22"/>
    </reaction>
</comment>
<comment type="cofactor">
    <cofactor evidence="1 2">
        <name>Zn(2+)</name>
        <dbReference type="ChEBI" id="CHEBI:29105"/>
    </cofactor>
    <text evidence="1 2">Binds 2 Zn(2+) ions per subunit.</text>
</comment>
<comment type="pathway">
    <text evidence="1">One-carbon metabolism; formaldehyde degradation; formate from formaldehyde (glutathione route): step 1/3.</text>
</comment>
<comment type="similarity">
    <text evidence="3">Belongs to the Gfa family.</text>
</comment>
<proteinExistence type="inferred from homology"/>
<sequence length="190" mass="20618">MPSIHPLIDNGITKGDEHFKGGKLYCHCPSNKVEVTLSSNVAHNHACGCSKCWKPKGALFSVVGVVPVDALSVTANGNKLHVVDSSAAIQRNACKDCGVHLFGRIVNDHPFKGLDFVHVELSDSKGWQEPQFAAFVSSIIEQGFPPNQIDAVREKFRKEGLQTYDVLSPTLMDLIATYTGQKSGKLSSKL</sequence>
<evidence type="ECO:0000255" key="1">
    <source>
        <dbReference type="HAMAP-Rule" id="MF_03142"/>
    </source>
</evidence>
<evidence type="ECO:0000255" key="2">
    <source>
        <dbReference type="PROSITE-ProRule" id="PRU01239"/>
    </source>
</evidence>
<evidence type="ECO:0000305" key="3"/>
<gene>
    <name type="ORF">SNOG_01600</name>
</gene>